<accession>C3MR87</accession>
<dbReference type="EC" id="6.1.1.7" evidence="1"/>
<dbReference type="EMBL" id="CP001399">
    <property type="protein sequence ID" value="ACP35900.1"/>
    <property type="molecule type" value="Genomic_DNA"/>
</dbReference>
<dbReference type="RefSeq" id="WP_012713972.1">
    <property type="nucleotide sequence ID" value="NC_012589.1"/>
</dbReference>
<dbReference type="SMR" id="C3MR87"/>
<dbReference type="GeneID" id="7799548"/>
<dbReference type="KEGG" id="sis:LS215_1905"/>
<dbReference type="HOGENOM" id="CLU_004485_4_0_2"/>
<dbReference type="OrthoDB" id="7506at2157"/>
<dbReference type="Proteomes" id="UP000001747">
    <property type="component" value="Chromosome"/>
</dbReference>
<dbReference type="GO" id="GO:0005737">
    <property type="term" value="C:cytoplasm"/>
    <property type="evidence" value="ECO:0007669"/>
    <property type="project" value="UniProtKB-SubCell"/>
</dbReference>
<dbReference type="GO" id="GO:0004813">
    <property type="term" value="F:alanine-tRNA ligase activity"/>
    <property type="evidence" value="ECO:0007669"/>
    <property type="project" value="UniProtKB-UniRule"/>
</dbReference>
<dbReference type="GO" id="GO:0002161">
    <property type="term" value="F:aminoacyl-tRNA deacylase activity"/>
    <property type="evidence" value="ECO:0007669"/>
    <property type="project" value="TreeGrafter"/>
</dbReference>
<dbReference type="GO" id="GO:0005524">
    <property type="term" value="F:ATP binding"/>
    <property type="evidence" value="ECO:0007669"/>
    <property type="project" value="UniProtKB-UniRule"/>
</dbReference>
<dbReference type="GO" id="GO:0000049">
    <property type="term" value="F:tRNA binding"/>
    <property type="evidence" value="ECO:0007669"/>
    <property type="project" value="UniProtKB-KW"/>
</dbReference>
<dbReference type="GO" id="GO:0008270">
    <property type="term" value="F:zinc ion binding"/>
    <property type="evidence" value="ECO:0007669"/>
    <property type="project" value="UniProtKB-UniRule"/>
</dbReference>
<dbReference type="GO" id="GO:0006419">
    <property type="term" value="P:alanyl-tRNA aminoacylation"/>
    <property type="evidence" value="ECO:0007669"/>
    <property type="project" value="UniProtKB-UniRule"/>
</dbReference>
<dbReference type="CDD" id="cd00673">
    <property type="entry name" value="AlaRS_core"/>
    <property type="match status" value="1"/>
</dbReference>
<dbReference type="FunFam" id="3.30.54.20:FF:000004">
    <property type="entry name" value="Alanine--tRNA ligase"/>
    <property type="match status" value="1"/>
</dbReference>
<dbReference type="FunFam" id="3.30.930.10:FF:000056">
    <property type="entry name" value="Alanine--tRNA ligase"/>
    <property type="match status" value="1"/>
</dbReference>
<dbReference type="FunFam" id="3.30.980.10:FF:000004">
    <property type="entry name" value="Alanine--tRNA ligase, cytoplasmic"/>
    <property type="match status" value="1"/>
</dbReference>
<dbReference type="Gene3D" id="2.40.30.130">
    <property type="match status" value="1"/>
</dbReference>
<dbReference type="Gene3D" id="3.30.54.20">
    <property type="match status" value="1"/>
</dbReference>
<dbReference type="Gene3D" id="3.30.930.10">
    <property type="entry name" value="Bira Bifunctional Protein, Domain 2"/>
    <property type="match status" value="1"/>
</dbReference>
<dbReference type="Gene3D" id="3.30.980.10">
    <property type="entry name" value="Threonyl-trna Synthetase, Chain A, domain 2"/>
    <property type="match status" value="1"/>
</dbReference>
<dbReference type="HAMAP" id="MF_00036_A">
    <property type="entry name" value="Ala_tRNA_synth_A"/>
    <property type="match status" value="1"/>
</dbReference>
<dbReference type="InterPro" id="IPR045864">
    <property type="entry name" value="aa-tRNA-synth_II/BPL/LPL"/>
</dbReference>
<dbReference type="InterPro" id="IPR002318">
    <property type="entry name" value="Ala-tRNA-lgiase_IIc"/>
</dbReference>
<dbReference type="InterPro" id="IPR018162">
    <property type="entry name" value="Ala-tRNA-ligase_IIc_anticod-bd"/>
</dbReference>
<dbReference type="InterPro" id="IPR018165">
    <property type="entry name" value="Ala-tRNA-synth_IIc_core"/>
</dbReference>
<dbReference type="InterPro" id="IPR018164">
    <property type="entry name" value="Ala-tRNA-synth_IIc_N"/>
</dbReference>
<dbReference type="InterPro" id="IPR022429">
    <property type="entry name" value="Ala-tRNA_lgiase_arc"/>
</dbReference>
<dbReference type="InterPro" id="IPR050058">
    <property type="entry name" value="Ala-tRNA_ligase"/>
</dbReference>
<dbReference type="InterPro" id="IPR018163">
    <property type="entry name" value="Thr/Ala-tRNA-synth_IIc_edit"/>
</dbReference>
<dbReference type="InterPro" id="IPR009000">
    <property type="entry name" value="Transl_B-barrel_sf"/>
</dbReference>
<dbReference type="InterPro" id="IPR012947">
    <property type="entry name" value="tRNA_SAD"/>
</dbReference>
<dbReference type="NCBIfam" id="TIGR03683">
    <property type="entry name" value="A-tRNA_syn_arch"/>
    <property type="match status" value="1"/>
</dbReference>
<dbReference type="NCBIfam" id="TIGR00344">
    <property type="entry name" value="alaS"/>
    <property type="match status" value="1"/>
</dbReference>
<dbReference type="PANTHER" id="PTHR11777:SF9">
    <property type="entry name" value="ALANINE--TRNA LIGASE, CYTOPLASMIC"/>
    <property type="match status" value="1"/>
</dbReference>
<dbReference type="PANTHER" id="PTHR11777">
    <property type="entry name" value="ALANYL-TRNA SYNTHETASE"/>
    <property type="match status" value="1"/>
</dbReference>
<dbReference type="Pfam" id="PF01411">
    <property type="entry name" value="tRNA-synt_2c"/>
    <property type="match status" value="1"/>
</dbReference>
<dbReference type="Pfam" id="PF07973">
    <property type="entry name" value="tRNA_SAD"/>
    <property type="match status" value="1"/>
</dbReference>
<dbReference type="PRINTS" id="PR00980">
    <property type="entry name" value="TRNASYNTHALA"/>
</dbReference>
<dbReference type="SMART" id="SM00863">
    <property type="entry name" value="tRNA_SAD"/>
    <property type="match status" value="1"/>
</dbReference>
<dbReference type="SUPFAM" id="SSF55681">
    <property type="entry name" value="Class II aaRS and biotin synthetases"/>
    <property type="match status" value="1"/>
</dbReference>
<dbReference type="SUPFAM" id="SSF101353">
    <property type="entry name" value="Putative anticodon-binding domain of alanyl-tRNA synthetase (AlaRS)"/>
    <property type="match status" value="1"/>
</dbReference>
<dbReference type="SUPFAM" id="SSF55186">
    <property type="entry name" value="ThrRS/AlaRS common domain"/>
    <property type="match status" value="1"/>
</dbReference>
<dbReference type="SUPFAM" id="SSF50447">
    <property type="entry name" value="Translation proteins"/>
    <property type="match status" value="1"/>
</dbReference>
<dbReference type="PROSITE" id="PS50860">
    <property type="entry name" value="AA_TRNA_LIGASE_II_ALA"/>
    <property type="match status" value="1"/>
</dbReference>
<gene>
    <name evidence="1" type="primary">alaS</name>
    <name type="ordered locus">LS215_1905</name>
</gene>
<protein>
    <recommendedName>
        <fullName evidence="1">Alanine--tRNA ligase</fullName>
        <ecNumber evidence="1">6.1.1.7</ecNumber>
    </recommendedName>
    <alternativeName>
        <fullName evidence="1">Alanyl-tRNA synthetase</fullName>
        <shortName evidence="1">AlaRS</shortName>
    </alternativeName>
</protein>
<organism>
    <name type="scientific">Saccharolobus islandicus (strain L.S.2.15 / Lassen #1)</name>
    <name type="common">Sulfolobus islandicus</name>
    <dbReference type="NCBI Taxonomy" id="429572"/>
    <lineage>
        <taxon>Archaea</taxon>
        <taxon>Thermoproteota</taxon>
        <taxon>Thermoprotei</taxon>
        <taxon>Sulfolobales</taxon>
        <taxon>Sulfolobaceae</taxon>
        <taxon>Saccharolobus</taxon>
    </lineage>
</organism>
<comment type="function">
    <text evidence="1">Catalyzes the attachment of alanine to tRNA(Ala) in a two-step reaction: alanine is first activated by ATP to form Ala-AMP and then transferred to the acceptor end of tRNA(Ala). Also edits incorrectly charged Ser-tRNA(Ala) and Gly-tRNA(Ala) via its editing domain.</text>
</comment>
<comment type="catalytic activity">
    <reaction evidence="1">
        <text>tRNA(Ala) + L-alanine + ATP = L-alanyl-tRNA(Ala) + AMP + diphosphate</text>
        <dbReference type="Rhea" id="RHEA:12540"/>
        <dbReference type="Rhea" id="RHEA-COMP:9657"/>
        <dbReference type="Rhea" id="RHEA-COMP:9923"/>
        <dbReference type="ChEBI" id="CHEBI:30616"/>
        <dbReference type="ChEBI" id="CHEBI:33019"/>
        <dbReference type="ChEBI" id="CHEBI:57972"/>
        <dbReference type="ChEBI" id="CHEBI:78442"/>
        <dbReference type="ChEBI" id="CHEBI:78497"/>
        <dbReference type="ChEBI" id="CHEBI:456215"/>
        <dbReference type="EC" id="6.1.1.7"/>
    </reaction>
</comment>
<comment type="cofactor">
    <cofactor evidence="1">
        <name>Zn(2+)</name>
        <dbReference type="ChEBI" id="CHEBI:29105"/>
    </cofactor>
    <text evidence="1">Binds 1 zinc ion per subunit.</text>
</comment>
<comment type="subcellular location">
    <subcellularLocation>
        <location evidence="1">Cytoplasm</location>
    </subcellularLocation>
</comment>
<comment type="domain">
    <text evidence="1">Consists of three domains; the N-terminal catalytic domain, the editing domain and the C-terminal C-Ala domain. The editing domain removes incorrectly charged amino acids, while the C-Ala domain, along with tRNA(Ala), serves as a bridge to cooperatively bring together the editing and aminoacylation centers thus stimulating deacylation of misacylated tRNAs.</text>
</comment>
<comment type="similarity">
    <text evidence="1">Belongs to the class-II aminoacyl-tRNA synthetase family.</text>
</comment>
<evidence type="ECO:0000255" key="1">
    <source>
        <dbReference type="HAMAP-Rule" id="MF_00036"/>
    </source>
</evidence>
<feature type="chain" id="PRO_1000202048" description="Alanine--tRNA ligase">
    <location>
        <begin position="1"/>
        <end position="900"/>
    </location>
</feature>
<feature type="binding site" evidence="1">
    <location>
        <position position="604"/>
    </location>
    <ligand>
        <name>Zn(2+)</name>
        <dbReference type="ChEBI" id="CHEBI:29105"/>
    </ligand>
</feature>
<feature type="binding site" evidence="1">
    <location>
        <position position="608"/>
    </location>
    <ligand>
        <name>Zn(2+)</name>
        <dbReference type="ChEBI" id="CHEBI:29105"/>
    </ligand>
</feature>
<feature type="binding site" evidence="1">
    <location>
        <position position="708"/>
    </location>
    <ligand>
        <name>Zn(2+)</name>
        <dbReference type="ChEBI" id="CHEBI:29105"/>
    </ligand>
</feature>
<feature type="binding site" evidence="1">
    <location>
        <position position="712"/>
    </location>
    <ligand>
        <name>Zn(2+)</name>
        <dbReference type="ChEBI" id="CHEBI:29105"/>
    </ligand>
</feature>
<keyword id="KW-0030">Aminoacyl-tRNA synthetase</keyword>
<keyword id="KW-0067">ATP-binding</keyword>
<keyword id="KW-0963">Cytoplasm</keyword>
<keyword id="KW-0436">Ligase</keyword>
<keyword id="KW-0479">Metal-binding</keyword>
<keyword id="KW-0547">Nucleotide-binding</keyword>
<keyword id="KW-0648">Protein biosynthesis</keyword>
<keyword id="KW-0694">RNA-binding</keyword>
<keyword id="KW-0820">tRNA-binding</keyword>
<keyword id="KW-0862">Zinc</keyword>
<name>SYA_SACI2</name>
<reference key="1">
    <citation type="journal article" date="2009" name="Proc. Natl. Acad. Sci. U.S.A.">
        <title>Biogeography of the Sulfolobus islandicus pan-genome.</title>
        <authorList>
            <person name="Reno M.L."/>
            <person name="Held N.L."/>
            <person name="Fields C.J."/>
            <person name="Burke P.V."/>
            <person name="Whitaker R.J."/>
        </authorList>
    </citation>
    <scope>NUCLEOTIDE SEQUENCE [LARGE SCALE GENOMIC DNA]</scope>
    <source>
        <strain>L.S.2.15 / Lassen #1</strain>
    </source>
</reference>
<proteinExistence type="inferred from homology"/>
<sequence>MKASEEEYRLNFFIKNDFKRKICKSCKTPFWTRDEKKEYCSDIPCTDYYFFDINIKSQPLTVKEAREKFLSFFEKRGHTRISPKPVLARWREDLYLTIASIVDFQPHVTSGLVPPPANPLVVSQPSIRLEDIDNVGITFGRHLTTFEMAAHHAFNYPDHYVYWKEETTAYATEFFTKELGIPEEELNFKESWWEGGGNAGPCLEVTVGGLELATLVFMQYKITDNGNYTPLKLKIVDTGYGVERIAWITQKTPSAFHAIYGNLVYKFFNKIGVAYIDETLLKVASRFAGKIDPDNPDTIKIHRQMVSKELGIDIKAVEEELDRAAKVFQILDHTKTIMLMLADGLVPSNSGEGYLGRLVIRRALKVLRLLKSDVRLYELVKEQIDFWKEDFPQVLKNKDYILDAVELEQQRFEKILEKVPSIASTLARKSEITTEDLIQVYDSNGIPPDLLEEELKKKSVKFELPRNFYALVAKRHQTSTIKSAYDKVKLPKDMLEYITALQPTEKLYYKDQYMRSFEGKVLGVYKNYLILDKTTFYPEGGGQLGDTGLIIDEKSSKRYEVIDTQKVNDVIVHILKEEPSTIKVGDNVRGEINWERRYRLMRHHTVTHVILAAAKKVLGEHVWQAGAEKTPEKGRLDITHHKTLTEEEVKLIENYANSVISDRRQVKPLEMNRMEAEMKYGVSIYEGGVPNSATIRLLEIKDWDIESCGGTHVSNTSEIGAVKIINVERIQDGVIRLEYVAGPALVDYIRETQAKIVEASKIIGTSPDQLTSRLRRILNEIEEKNNLIIQYRRIIETELLNNLKPYEINGNKIYIIEGLGDEEENKEILRKLTSTDNTIAISISDNRLQIATSKNMRVDKIVEELLKGGGKGGGKGTFANVILNSKKSKEEIIEIVRKSL</sequence>